<name>OTSA_MYCTU</name>
<proteinExistence type="evidence at protein level"/>
<dbReference type="EC" id="2.4.1.15" evidence="2"/>
<dbReference type="EC" id="2.4.1.347" evidence="2"/>
<dbReference type="EMBL" id="AL123456">
    <property type="protein sequence ID" value="CCP46312.1"/>
    <property type="molecule type" value="Genomic_DNA"/>
</dbReference>
<dbReference type="PIR" id="G70569">
    <property type="entry name" value="G70569"/>
</dbReference>
<dbReference type="RefSeq" id="NP_218007.1">
    <property type="nucleotide sequence ID" value="NC_000962.3"/>
</dbReference>
<dbReference type="RefSeq" id="WP_003900868.1">
    <property type="nucleotide sequence ID" value="NZ_NVQJ01000042.1"/>
</dbReference>
<dbReference type="SMR" id="P9WN11"/>
<dbReference type="FunCoup" id="P9WN11">
    <property type="interactions" value="190"/>
</dbReference>
<dbReference type="STRING" id="83332.Rv3490"/>
<dbReference type="PaxDb" id="83332-Rv3490"/>
<dbReference type="DNASU" id="888404"/>
<dbReference type="GeneID" id="888404"/>
<dbReference type="KEGG" id="mtu:Rv3490"/>
<dbReference type="KEGG" id="mtv:RVBD_3490"/>
<dbReference type="TubercuList" id="Rv3490"/>
<dbReference type="eggNOG" id="COG0380">
    <property type="taxonomic scope" value="Bacteria"/>
</dbReference>
<dbReference type="InParanoid" id="P9WN11"/>
<dbReference type="OrthoDB" id="9761633at2"/>
<dbReference type="PhylomeDB" id="P9WN11"/>
<dbReference type="BioCyc" id="MetaCyc:G185E-7767-MONOMER"/>
<dbReference type="BRENDA" id="2.4.1.347">
    <property type="organism ID" value="3445"/>
</dbReference>
<dbReference type="Reactome" id="R-MTU-868688">
    <property type="pathway name" value="Trehalose biosynthesis"/>
</dbReference>
<dbReference type="SABIO-RK" id="P9WN11"/>
<dbReference type="UniPathway" id="UPA00299"/>
<dbReference type="Proteomes" id="UP000001584">
    <property type="component" value="Chromosome"/>
</dbReference>
<dbReference type="GO" id="GO:0005829">
    <property type="term" value="C:cytosol"/>
    <property type="evidence" value="ECO:0000304"/>
    <property type="project" value="Reactome"/>
</dbReference>
<dbReference type="GO" id="GO:0009274">
    <property type="term" value="C:peptidoglycan-based cell wall"/>
    <property type="evidence" value="ECO:0007005"/>
    <property type="project" value="MTBBASE"/>
</dbReference>
<dbReference type="GO" id="GO:0005886">
    <property type="term" value="C:plasma membrane"/>
    <property type="evidence" value="ECO:0007005"/>
    <property type="project" value="MTBBASE"/>
</dbReference>
<dbReference type="GO" id="GO:0047260">
    <property type="term" value="F:alpha,alpha-trehalose-phosphate synthase (GDP-forming) activity"/>
    <property type="evidence" value="ECO:0000314"/>
    <property type="project" value="MTBBASE"/>
</dbReference>
<dbReference type="GO" id="GO:0003825">
    <property type="term" value="F:alpha,alpha-trehalose-phosphate synthase (UDP-forming) activity"/>
    <property type="evidence" value="ECO:0000314"/>
    <property type="project" value="MTBBASE"/>
</dbReference>
<dbReference type="GO" id="GO:0030145">
    <property type="term" value="F:manganese ion binding"/>
    <property type="evidence" value="ECO:0000314"/>
    <property type="project" value="MTBBASE"/>
</dbReference>
<dbReference type="GO" id="GO:0005992">
    <property type="term" value="P:trehalose biosynthetic process"/>
    <property type="evidence" value="ECO:0000314"/>
    <property type="project" value="MTBBASE"/>
</dbReference>
<dbReference type="CDD" id="cd03788">
    <property type="entry name" value="GT20_TPS"/>
    <property type="match status" value="1"/>
</dbReference>
<dbReference type="FunFam" id="3.40.50.2000:FF:000102">
    <property type="entry name" value="Trehalose-6-phosphate synthase"/>
    <property type="match status" value="1"/>
</dbReference>
<dbReference type="FunFam" id="3.40.50.2000:FF:000262">
    <property type="entry name" value="Trehalose-6-phosphate synthase"/>
    <property type="match status" value="1"/>
</dbReference>
<dbReference type="Gene3D" id="3.40.50.2000">
    <property type="entry name" value="Glycogen Phosphorylase B"/>
    <property type="match status" value="2"/>
</dbReference>
<dbReference type="InterPro" id="IPR001830">
    <property type="entry name" value="Glyco_trans_20"/>
</dbReference>
<dbReference type="PANTHER" id="PTHR10788:SF106">
    <property type="entry name" value="BCDNA.GH08860"/>
    <property type="match status" value="1"/>
</dbReference>
<dbReference type="PANTHER" id="PTHR10788">
    <property type="entry name" value="TREHALOSE-6-PHOSPHATE SYNTHASE"/>
    <property type="match status" value="1"/>
</dbReference>
<dbReference type="Pfam" id="PF00982">
    <property type="entry name" value="Glyco_transf_20"/>
    <property type="match status" value="1"/>
</dbReference>
<dbReference type="SUPFAM" id="SSF53756">
    <property type="entry name" value="UDP-Glycosyltransferase/glycogen phosphorylase"/>
    <property type="match status" value="1"/>
</dbReference>
<reference key="1">
    <citation type="journal article" date="1998" name="Nature">
        <title>Deciphering the biology of Mycobacterium tuberculosis from the complete genome sequence.</title>
        <authorList>
            <person name="Cole S.T."/>
            <person name="Brosch R."/>
            <person name="Parkhill J."/>
            <person name="Garnier T."/>
            <person name="Churcher C.M."/>
            <person name="Harris D.E."/>
            <person name="Gordon S.V."/>
            <person name="Eiglmeier K."/>
            <person name="Gas S."/>
            <person name="Barry C.E. III"/>
            <person name="Tekaia F."/>
            <person name="Badcock K."/>
            <person name="Basham D."/>
            <person name="Brown D."/>
            <person name="Chillingworth T."/>
            <person name="Connor R."/>
            <person name="Davies R.M."/>
            <person name="Devlin K."/>
            <person name="Feltwell T."/>
            <person name="Gentles S."/>
            <person name="Hamlin N."/>
            <person name="Holroyd S."/>
            <person name="Hornsby T."/>
            <person name="Jagels K."/>
            <person name="Krogh A."/>
            <person name="McLean J."/>
            <person name="Moule S."/>
            <person name="Murphy L.D."/>
            <person name="Oliver S."/>
            <person name="Osborne J."/>
            <person name="Quail M.A."/>
            <person name="Rajandream M.A."/>
            <person name="Rogers J."/>
            <person name="Rutter S."/>
            <person name="Seeger K."/>
            <person name="Skelton S."/>
            <person name="Squares S."/>
            <person name="Squares R."/>
            <person name="Sulston J.E."/>
            <person name="Taylor K."/>
            <person name="Whitehead S."/>
            <person name="Barrell B.G."/>
        </authorList>
    </citation>
    <scope>NUCLEOTIDE SEQUENCE [LARGE SCALE GENOMIC DNA]</scope>
    <source>
        <strain>ATCC 25618 / H37Rv</strain>
    </source>
</reference>
<reference key="2">
    <citation type="journal article" date="2002" name="Eur. J. Biochem.">
        <title>Trehalose-phosphate synthase of Mycobacterium tuberculosis. Cloning, expression and properties of the recombinant enzyme.</title>
        <authorList>
            <person name="Pan Y.T."/>
            <person name="Carroll J.D."/>
            <person name="Elbein A.D."/>
        </authorList>
    </citation>
    <scope>FUNCTION</scope>
    <scope>CATALYTIC ACTIVITY</scope>
    <scope>BIOPHYSICOCHEMICAL PROPERTIES</scope>
    <scope>SUBSTRATE SPECIFICITY</scope>
    <scope>ACTIVITY REGULATION</scope>
    <scope>SUBUNIT</scope>
    <source>
        <strain>ATCC 25618 / H37Rv</strain>
    </source>
</reference>
<reference key="3">
    <citation type="journal article" date="2011" name="Mol. Cell. Proteomics">
        <title>Proteogenomic analysis of Mycobacterium tuberculosis by high resolution mass spectrometry.</title>
        <authorList>
            <person name="Kelkar D.S."/>
            <person name="Kumar D."/>
            <person name="Kumar P."/>
            <person name="Balakrishnan L."/>
            <person name="Muthusamy B."/>
            <person name="Yadav A.K."/>
            <person name="Shrivastava P."/>
            <person name="Marimuthu A."/>
            <person name="Anand S."/>
            <person name="Sundaram H."/>
            <person name="Kingsbury R."/>
            <person name="Harsha H.C."/>
            <person name="Nair B."/>
            <person name="Prasad T.S."/>
            <person name="Chauhan D.S."/>
            <person name="Katoch K."/>
            <person name="Katoch V.M."/>
            <person name="Kumar P."/>
            <person name="Chaerkady R."/>
            <person name="Ramachandran S."/>
            <person name="Dash D."/>
            <person name="Pandey A."/>
        </authorList>
    </citation>
    <scope>IDENTIFICATION BY MASS SPECTROMETRY [LARGE SCALE ANALYSIS]</scope>
    <source>
        <strain>ATCC 25618 / H37Rv</strain>
    </source>
</reference>
<reference key="4">
    <citation type="journal article" date="2016" name="PLoS Pathog.">
        <title>Metabolic network for the biosynthesis of intra- and extracellular alpha-glucans required for virulence of Mycobacterium tuberculosis.</title>
        <authorList>
            <person name="Koliwer-Brandl H."/>
            <person name="Syson K."/>
            <person name="van de Weerd R."/>
            <person name="Chandra G."/>
            <person name="Appelmelk B."/>
            <person name="Alber M."/>
            <person name="Ioerger T.R."/>
            <person name="Jacobs W.R. Jr."/>
            <person name="Geurtsen J."/>
            <person name="Bornemann S."/>
            <person name="Kalscheuer R."/>
        </authorList>
    </citation>
    <scope>FUNCTION</scope>
    <scope>DISRUPTION PHENOTYPE</scope>
</reference>
<keyword id="KW-0328">Glycosyltransferase</keyword>
<keyword id="KW-1185">Reference proteome</keyword>
<keyword id="KW-0808">Transferase</keyword>
<evidence type="ECO:0000250" key="1">
    <source>
        <dbReference type="UniProtKB" id="P31677"/>
    </source>
</evidence>
<evidence type="ECO:0000269" key="2">
    <source>
    </source>
</evidence>
<evidence type="ECO:0000269" key="3">
    <source>
    </source>
</evidence>
<evidence type="ECO:0000303" key="4">
    <source>
    </source>
</evidence>
<evidence type="ECO:0000305" key="5"/>
<sequence>MAPSGGQEAQICDSETFGDSDFVVVANRLPVDLERLPDGSTTWKRSPGGLVTALEPVLRRRRGAWVGWPGVNDDGAEPDLHVLDGPIIQDELELHPVRLSTTDIAQYYEGFSNATLWPLYHDVIVKPLYHREWWDRYVDVNQRFAEAASRAAAHGATVWVQDYQLQLVPKMLRMLRPDLTIGFFLHIPFPPVELFMQMPWRTEIIQGLLGADLVGFHLPGGAQNFLILSRRLVGTDTSRGTVGVRSRFGAAVLGSRTIRVGAFPISVDSGALDHAARDRNIRRRAREIRTELGNPRKILLGVDRLDYTKGIDVRLKAFSELLAEGRVKRDDTVVVQLATPSRERVESYQTLRNDIERQVGHINGEYGEVGHPVVHYLHRPAPRDELIAFFVASDVMLVTPLRDGMNLVAKEYVACRSDLGGALVLSEFTGAAAELRHAYLVNPHDLEGVKDGIEEALNQTEEAGRRRMRSLRRQVLAHDVDRWAQSFLDALAGAHPRGQG</sequence>
<accession>P9WN11</accession>
<accession>L0TE99</accession>
<accession>O06353</accession>
<accession>Q7D5F6</accession>
<organism>
    <name type="scientific">Mycobacterium tuberculosis (strain ATCC 25618 / H37Rv)</name>
    <dbReference type="NCBI Taxonomy" id="83332"/>
    <lineage>
        <taxon>Bacteria</taxon>
        <taxon>Bacillati</taxon>
        <taxon>Actinomycetota</taxon>
        <taxon>Actinomycetes</taxon>
        <taxon>Mycobacteriales</taxon>
        <taxon>Mycobacteriaceae</taxon>
        <taxon>Mycobacterium</taxon>
        <taxon>Mycobacterium tuberculosis complex</taxon>
    </lineage>
</organism>
<gene>
    <name evidence="4" type="primary">otsA</name>
    <name type="ordered locus">Rv3490</name>
</gene>
<feature type="chain" id="PRO_0000348922" description="Trehalose-6-phosphate synthase">
    <location>
        <begin position="1"/>
        <end position="500"/>
    </location>
</feature>
<feature type="binding site" evidence="1">
    <location>
        <position position="28"/>
    </location>
    <ligand>
        <name>D-glucose 6-phosphate</name>
        <dbReference type="ChEBI" id="CHEBI:61548"/>
    </ligand>
</feature>
<feature type="binding site" evidence="1">
    <location>
        <begin position="48"/>
        <end position="49"/>
    </location>
    <ligand>
        <name>UDP-alpha-D-glucose</name>
        <dbReference type="ChEBI" id="CHEBI:58885"/>
    </ligand>
</feature>
<feature type="binding site" evidence="1">
    <location>
        <position position="108"/>
    </location>
    <ligand>
        <name>D-glucose 6-phosphate</name>
        <dbReference type="ChEBI" id="CHEBI:61548"/>
    </ligand>
</feature>
<feature type="binding site" evidence="1">
    <location>
        <position position="162"/>
    </location>
    <ligand>
        <name>D-glucose 6-phosphate</name>
        <dbReference type="ChEBI" id="CHEBI:61548"/>
    </ligand>
</feature>
<feature type="binding site" evidence="1">
    <location>
        <position position="304"/>
    </location>
    <ligand>
        <name>UDP-alpha-D-glucose</name>
        <dbReference type="ChEBI" id="CHEBI:58885"/>
    </ligand>
</feature>
<feature type="binding site" evidence="1">
    <location>
        <position position="309"/>
    </location>
    <ligand>
        <name>UDP-alpha-D-glucose</name>
        <dbReference type="ChEBI" id="CHEBI:58885"/>
    </ligand>
</feature>
<feature type="binding site" evidence="1">
    <location>
        <position position="342"/>
    </location>
    <ligand>
        <name>D-glucose 6-phosphate</name>
        <dbReference type="ChEBI" id="CHEBI:61548"/>
    </ligand>
</feature>
<feature type="binding site" evidence="1">
    <location>
        <begin position="407"/>
        <end position="411"/>
    </location>
    <ligand>
        <name>UDP-alpha-D-glucose</name>
        <dbReference type="ChEBI" id="CHEBI:58885"/>
    </ligand>
</feature>
<feature type="site" description="Involved in alpha anomer selectivity" evidence="1">
    <location>
        <position position="117"/>
    </location>
</feature>
<feature type="site" description="Involved in alpha anomer selectivity" evidence="1">
    <location>
        <position position="187"/>
    </location>
</feature>
<protein>
    <recommendedName>
        <fullName evidence="4">Trehalose-6-phosphate synthase</fullName>
        <shortName evidence="4">TPS</shortName>
        <ecNumber evidence="2">2.4.1.15</ecNumber>
        <ecNumber evidence="2">2.4.1.347</ecNumber>
    </recommendedName>
    <alternativeName>
        <fullName evidence="5">Alpha,alpha-trehalose-phosphate synthase [UDP-forming]</fullName>
    </alternativeName>
    <alternativeName>
        <fullName evidence="1">Osmoregulatory trehalose synthesis protein A</fullName>
        <shortName evidence="1">OtsA</shortName>
    </alternativeName>
</protein>
<comment type="function">
    <text evidence="2 3">Involved in the production of glycogen and alpha-glucan via the TreS-Pep2 branch involved in the biosynthesis of maltose-1-phosphate (M1P), and probably in the osmoprotection via the biosynthesis of trehalose (PubMed:12473104, PubMed:27513637). Catalyzes the transfer of glucose from UDP-glucose (UDP-Glc) to D-glucose 6-phosphate (Glc-6-P) to form trehalose-6-phosphate (PubMed:12473104). Is specific for the glucosyl acceptor (Glc-6-P cannot be replaced by either mannose-6-P, fructose-6-P or glucosamine-6-P), but any of the glucose sugar nucleotides can be used as glucosyl donors (PubMed:12473104). It is more active with the purine sugar nucleotides than with the pyrimidine sugar nucleotides (PubMed:12473104).</text>
</comment>
<comment type="catalytic activity">
    <reaction evidence="2">
        <text>ADP-alpha-D-glucose + D-glucose 6-phosphate = alpha,alpha-trehalose 6-phosphate + ADP + H(+)</text>
        <dbReference type="Rhea" id="RHEA:53880"/>
        <dbReference type="ChEBI" id="CHEBI:15378"/>
        <dbReference type="ChEBI" id="CHEBI:57498"/>
        <dbReference type="ChEBI" id="CHEBI:58429"/>
        <dbReference type="ChEBI" id="CHEBI:61548"/>
        <dbReference type="ChEBI" id="CHEBI:456216"/>
        <dbReference type="EC" id="2.4.1.347"/>
    </reaction>
</comment>
<comment type="catalytic activity">
    <reaction evidence="2">
        <text>CDP-alpha-D-glucose + D-glucose 6-phosphate = alpha,alpha-trehalose 6-phosphate + CDP + H(+)</text>
        <dbReference type="Rhea" id="RHEA:53884"/>
        <dbReference type="ChEBI" id="CHEBI:15378"/>
        <dbReference type="ChEBI" id="CHEBI:58069"/>
        <dbReference type="ChEBI" id="CHEBI:58429"/>
        <dbReference type="ChEBI" id="CHEBI:61548"/>
        <dbReference type="ChEBI" id="CHEBI:137927"/>
    </reaction>
</comment>
<comment type="catalytic activity">
    <reaction evidence="2">
        <text>GDP-alpha-D-glucose + D-glucose 6-phosphate = alpha,alpha-trehalose 6-phosphate + GDP + H(+)</text>
        <dbReference type="Rhea" id="RHEA:14605"/>
        <dbReference type="ChEBI" id="CHEBI:15378"/>
        <dbReference type="ChEBI" id="CHEBI:58189"/>
        <dbReference type="ChEBI" id="CHEBI:58429"/>
        <dbReference type="ChEBI" id="CHEBI:61548"/>
        <dbReference type="ChEBI" id="CHEBI:62230"/>
    </reaction>
</comment>
<comment type="catalytic activity">
    <reaction evidence="2">
        <text>TDP-alpha-D-glucose + D-glucose 6-phosphate = 5-methyl-UDP + alpha,alpha-trehalose 6-phosphate + H(+)</text>
        <dbReference type="Rhea" id="RHEA:53888"/>
        <dbReference type="ChEBI" id="CHEBI:15378"/>
        <dbReference type="ChEBI" id="CHEBI:58429"/>
        <dbReference type="ChEBI" id="CHEBI:61417"/>
        <dbReference type="ChEBI" id="CHEBI:61548"/>
        <dbReference type="ChEBI" id="CHEBI:137931"/>
    </reaction>
</comment>
<comment type="catalytic activity">
    <reaction evidence="2">
        <text>D-glucose 6-phosphate + UDP-alpha-D-glucose = alpha,alpha-trehalose 6-phosphate + UDP + H(+)</text>
        <dbReference type="Rhea" id="RHEA:18889"/>
        <dbReference type="ChEBI" id="CHEBI:15378"/>
        <dbReference type="ChEBI" id="CHEBI:58223"/>
        <dbReference type="ChEBI" id="CHEBI:58429"/>
        <dbReference type="ChEBI" id="CHEBI:58885"/>
        <dbReference type="ChEBI" id="CHEBI:61548"/>
        <dbReference type="EC" id="2.4.1.15"/>
    </reaction>
</comment>
<comment type="activity regulation">
    <text evidence="2">Activity is increased about twofold by 10 mM manganese. ADP, at 10 mM concentration, inhibits the formation of trehalose-P by 70% with either UDP-glucose or GDP-glucose as substrate, but GDP, also at 10 mM, only inhibits the reaction with UDP-glucose (50%) but not with GDP-glucose.</text>
</comment>
<comment type="biophysicochemical properties">
    <kinetics>
        <KM evidence="2">18 mM for UDP-glucose</KM>
        <KM evidence="2">16 mM for GDP-glucose</KM>
        <KM evidence="2">7 mM for D-glucose 6-phosphate (with UDP-glucose as glucosyl donor)</KM>
        <KM evidence="2">4 mM for D-glucose 6-phosphate (with GDP-glucose as glucosyl donor)</KM>
    </kinetics>
</comment>
<comment type="pathway">
    <text evidence="5">Glycan biosynthesis; trehalose biosynthesis.</text>
</comment>
<comment type="subunit">
    <text evidence="2">Homotetramer.</text>
</comment>
<comment type="disruption phenotype">
    <text evidence="3">Combined inactivation of both glgM and ostA is lethal, potentially due to accumulation of toxic levels of ADP-glucose. Combined inactivation of otsA and glgC results in a loss of alpha-glucans and maltose-1-phosphate (M1P).</text>
</comment>
<comment type="similarity">
    <text evidence="5">Belongs to the glycosyltransferase 20 family.</text>
</comment>